<accession>Q8K2A6</accession>
<accession>Q8BJ28</accession>
<keyword id="KW-1015">Disulfide bond</keyword>
<keyword id="KW-0325">Glycoprotein</keyword>
<keyword id="KW-0378">Hydrolase</keyword>
<keyword id="KW-0442">Lipid degradation</keyword>
<keyword id="KW-0443">Lipid metabolism</keyword>
<keyword id="KW-1185">Reference proteome</keyword>
<keyword id="KW-0964">Secreted</keyword>
<keyword id="KW-0732">Signal</keyword>
<reference key="1">
    <citation type="journal article" date="2005" name="Science">
        <title>The transcriptional landscape of the mammalian genome.</title>
        <authorList>
            <person name="Carninci P."/>
            <person name="Kasukawa T."/>
            <person name="Katayama S."/>
            <person name="Gough J."/>
            <person name="Frith M.C."/>
            <person name="Maeda N."/>
            <person name="Oyama R."/>
            <person name="Ravasi T."/>
            <person name="Lenhard B."/>
            <person name="Wells C."/>
            <person name="Kodzius R."/>
            <person name="Shimokawa K."/>
            <person name="Bajic V.B."/>
            <person name="Brenner S.E."/>
            <person name="Batalov S."/>
            <person name="Forrest A.R."/>
            <person name="Zavolan M."/>
            <person name="Davis M.J."/>
            <person name="Wilming L.G."/>
            <person name="Aidinis V."/>
            <person name="Allen J.E."/>
            <person name="Ambesi-Impiombato A."/>
            <person name="Apweiler R."/>
            <person name="Aturaliya R.N."/>
            <person name="Bailey T.L."/>
            <person name="Bansal M."/>
            <person name="Baxter L."/>
            <person name="Beisel K.W."/>
            <person name="Bersano T."/>
            <person name="Bono H."/>
            <person name="Chalk A.M."/>
            <person name="Chiu K.P."/>
            <person name="Choudhary V."/>
            <person name="Christoffels A."/>
            <person name="Clutterbuck D.R."/>
            <person name="Crowe M.L."/>
            <person name="Dalla E."/>
            <person name="Dalrymple B.P."/>
            <person name="de Bono B."/>
            <person name="Della Gatta G."/>
            <person name="di Bernardo D."/>
            <person name="Down T."/>
            <person name="Engstrom P."/>
            <person name="Fagiolini M."/>
            <person name="Faulkner G."/>
            <person name="Fletcher C.F."/>
            <person name="Fukushima T."/>
            <person name="Furuno M."/>
            <person name="Futaki S."/>
            <person name="Gariboldi M."/>
            <person name="Georgii-Hemming P."/>
            <person name="Gingeras T.R."/>
            <person name="Gojobori T."/>
            <person name="Green R.E."/>
            <person name="Gustincich S."/>
            <person name="Harbers M."/>
            <person name="Hayashi Y."/>
            <person name="Hensch T.K."/>
            <person name="Hirokawa N."/>
            <person name="Hill D."/>
            <person name="Huminiecki L."/>
            <person name="Iacono M."/>
            <person name="Ikeo K."/>
            <person name="Iwama A."/>
            <person name="Ishikawa T."/>
            <person name="Jakt M."/>
            <person name="Kanapin A."/>
            <person name="Katoh M."/>
            <person name="Kawasawa Y."/>
            <person name="Kelso J."/>
            <person name="Kitamura H."/>
            <person name="Kitano H."/>
            <person name="Kollias G."/>
            <person name="Krishnan S.P."/>
            <person name="Kruger A."/>
            <person name="Kummerfeld S.K."/>
            <person name="Kurochkin I.V."/>
            <person name="Lareau L.F."/>
            <person name="Lazarevic D."/>
            <person name="Lipovich L."/>
            <person name="Liu J."/>
            <person name="Liuni S."/>
            <person name="McWilliam S."/>
            <person name="Madan Babu M."/>
            <person name="Madera M."/>
            <person name="Marchionni L."/>
            <person name="Matsuda H."/>
            <person name="Matsuzawa S."/>
            <person name="Miki H."/>
            <person name="Mignone F."/>
            <person name="Miyake S."/>
            <person name="Morris K."/>
            <person name="Mottagui-Tabar S."/>
            <person name="Mulder N."/>
            <person name="Nakano N."/>
            <person name="Nakauchi H."/>
            <person name="Ng P."/>
            <person name="Nilsson R."/>
            <person name="Nishiguchi S."/>
            <person name="Nishikawa S."/>
            <person name="Nori F."/>
            <person name="Ohara O."/>
            <person name="Okazaki Y."/>
            <person name="Orlando V."/>
            <person name="Pang K.C."/>
            <person name="Pavan W.J."/>
            <person name="Pavesi G."/>
            <person name="Pesole G."/>
            <person name="Petrovsky N."/>
            <person name="Piazza S."/>
            <person name="Reed J."/>
            <person name="Reid J.F."/>
            <person name="Ring B.Z."/>
            <person name="Ringwald M."/>
            <person name="Rost B."/>
            <person name="Ruan Y."/>
            <person name="Salzberg S.L."/>
            <person name="Sandelin A."/>
            <person name="Schneider C."/>
            <person name="Schoenbach C."/>
            <person name="Sekiguchi K."/>
            <person name="Semple C.A."/>
            <person name="Seno S."/>
            <person name="Sessa L."/>
            <person name="Sheng Y."/>
            <person name="Shibata Y."/>
            <person name="Shimada H."/>
            <person name="Shimada K."/>
            <person name="Silva D."/>
            <person name="Sinclair B."/>
            <person name="Sperling S."/>
            <person name="Stupka E."/>
            <person name="Sugiura K."/>
            <person name="Sultana R."/>
            <person name="Takenaka Y."/>
            <person name="Taki K."/>
            <person name="Tammoja K."/>
            <person name="Tan S.L."/>
            <person name="Tang S."/>
            <person name="Taylor M.S."/>
            <person name="Tegner J."/>
            <person name="Teichmann S.A."/>
            <person name="Ueda H.R."/>
            <person name="van Nimwegen E."/>
            <person name="Verardo R."/>
            <person name="Wei C.L."/>
            <person name="Yagi K."/>
            <person name="Yamanishi H."/>
            <person name="Zabarovsky E."/>
            <person name="Zhu S."/>
            <person name="Zimmer A."/>
            <person name="Hide W."/>
            <person name="Bult C."/>
            <person name="Grimmond S.M."/>
            <person name="Teasdale R.D."/>
            <person name="Liu E.T."/>
            <person name="Brusic V."/>
            <person name="Quackenbush J."/>
            <person name="Wahlestedt C."/>
            <person name="Mattick J.S."/>
            <person name="Hume D.A."/>
            <person name="Kai C."/>
            <person name="Sasaki D."/>
            <person name="Tomaru Y."/>
            <person name="Fukuda S."/>
            <person name="Kanamori-Katayama M."/>
            <person name="Suzuki M."/>
            <person name="Aoki J."/>
            <person name="Arakawa T."/>
            <person name="Iida J."/>
            <person name="Imamura K."/>
            <person name="Itoh M."/>
            <person name="Kato T."/>
            <person name="Kawaji H."/>
            <person name="Kawagashira N."/>
            <person name="Kawashima T."/>
            <person name="Kojima M."/>
            <person name="Kondo S."/>
            <person name="Konno H."/>
            <person name="Nakano K."/>
            <person name="Ninomiya N."/>
            <person name="Nishio T."/>
            <person name="Okada M."/>
            <person name="Plessy C."/>
            <person name="Shibata K."/>
            <person name="Shiraki T."/>
            <person name="Suzuki S."/>
            <person name="Tagami M."/>
            <person name="Waki K."/>
            <person name="Watahiki A."/>
            <person name="Okamura-Oho Y."/>
            <person name="Suzuki H."/>
            <person name="Kawai J."/>
            <person name="Hayashizaki Y."/>
        </authorList>
    </citation>
    <scope>NUCLEOTIDE SEQUENCE [LARGE SCALE MRNA]</scope>
    <source>
        <strain>C57BL/6J</strain>
        <tissue>Mammary gland</tissue>
        <tissue>Neonatal skin</tissue>
        <tissue>Vagina</tissue>
    </source>
</reference>
<reference key="2">
    <citation type="journal article" date="2004" name="Genome Res.">
        <title>The status, quality, and expansion of the NIH full-length cDNA project: the Mammalian Gene Collection (MGC).</title>
        <authorList>
            <consortium name="The MGC Project Team"/>
        </authorList>
    </citation>
    <scope>NUCLEOTIDE SEQUENCE [LARGE SCALE MRNA]</scope>
    <source>
        <strain>Czech II</strain>
        <tissue>Mammary tumor</tissue>
    </source>
</reference>
<sequence>MSEILSRVWTVSHRVEIWLLILVAYLLQRNVNSGHLPTKAADPEAFMNVSEIIKHKGYPSEEYEVATEDGYILSVNRIPRGQTRLKKEGSRPVVLLQHGLLGDASNWISNLPNNSLGFILADAGFDVWMGNSRGNTWSRKHKTLSIDQDEFWAFSYDEMARFDLPAVINFILQKTGQKKVYYVGYSQGTTMGFIAFSTMPELAHKIKMYFALAPIATVKYARSPGTKFLLLPDMMIKVLFGRQEFLYQTRFFRQLFIYLCGQMILDQICSNIILLLGGFNTNNMNMSRANVYVAHTPAGTSVQNILHWSQAVNSGELRAFDWGSETKNQEKCNQPTPIRYKVRDMMVPTAMWTGGQDWLSNPDDVKTLLSEVTNLIYHKNIPEWAHVDFIWGLDAPQRVYNEIIHLMKQEPNLPQGTCRVKL</sequence>
<feature type="signal peptide" evidence="2">
    <location>
        <begin position="1"/>
        <end position="33"/>
    </location>
</feature>
<feature type="chain" id="PRO_0000286830" description="Lipase member M">
    <location>
        <begin position="34"/>
        <end position="422"/>
    </location>
</feature>
<feature type="domain" description="AB hydrolase-1" evidence="2">
    <location>
        <begin position="92"/>
        <end position="392"/>
    </location>
</feature>
<feature type="active site" description="Nucleophile" evidence="1">
    <location>
        <position position="186"/>
    </location>
</feature>
<feature type="active site" description="Charge relay system" evidence="3">
    <location>
        <position position="357"/>
    </location>
</feature>
<feature type="active site" description="Charge relay system" evidence="3">
    <location>
        <position position="386"/>
    </location>
</feature>
<feature type="glycosylation site" description="N-linked (GlcNAc...) asparagine" evidence="2">
    <location>
        <position position="48"/>
    </location>
</feature>
<feature type="disulfide bond" evidence="1">
    <location>
        <begin position="260"/>
        <end position="269"/>
    </location>
</feature>
<feature type="sequence conflict" description="In Ref. 1; BAC29757." evidence="4" ref="1">
    <original>I</original>
    <variation>F</variation>
    <location>
        <position position="72"/>
    </location>
</feature>
<evidence type="ECO:0000250" key="1"/>
<evidence type="ECO:0000255" key="2"/>
<evidence type="ECO:0000255" key="3">
    <source>
        <dbReference type="PROSITE-ProRule" id="PRU10037"/>
    </source>
</evidence>
<evidence type="ECO:0000305" key="4"/>
<gene>
    <name type="primary">Lipm</name>
    <name type="synonym">Lipl3</name>
</gene>
<proteinExistence type="evidence at transcript level"/>
<comment type="function">
    <text evidence="1">Plays a highly specific role in the last step of keratinocyte differentiation. May have an essential function in lipid metabolism of the most differentiated epidermal layers (By similarity).</text>
</comment>
<comment type="subcellular location">
    <subcellularLocation>
        <location evidence="4">Secreted</location>
    </subcellularLocation>
</comment>
<comment type="similarity">
    <text evidence="4">Belongs to the AB hydrolase superfamily. Lipase family.</text>
</comment>
<protein>
    <recommendedName>
        <fullName>Lipase member M</fullName>
        <ecNumber>3.1.1.-</ecNumber>
    </recommendedName>
    <alternativeName>
        <fullName>Lipase-like abhydrolase domain-containing protein 3</fullName>
    </alternativeName>
</protein>
<organism>
    <name type="scientific">Mus musculus</name>
    <name type="common">Mouse</name>
    <dbReference type="NCBI Taxonomy" id="10090"/>
    <lineage>
        <taxon>Eukaryota</taxon>
        <taxon>Metazoa</taxon>
        <taxon>Chordata</taxon>
        <taxon>Craniata</taxon>
        <taxon>Vertebrata</taxon>
        <taxon>Euteleostomi</taxon>
        <taxon>Mammalia</taxon>
        <taxon>Eutheria</taxon>
        <taxon>Euarchontoglires</taxon>
        <taxon>Glires</taxon>
        <taxon>Rodentia</taxon>
        <taxon>Myomorpha</taxon>
        <taxon>Muroidea</taxon>
        <taxon>Muridae</taxon>
        <taxon>Murinae</taxon>
        <taxon>Mus</taxon>
        <taxon>Mus</taxon>
    </lineage>
</organism>
<name>LIPM_MOUSE</name>
<dbReference type="EC" id="3.1.1.-"/>
<dbReference type="EMBL" id="AK037091">
    <property type="protein sequence ID" value="BAC29699.1"/>
    <property type="molecule type" value="mRNA"/>
</dbReference>
<dbReference type="EMBL" id="AK037214">
    <property type="protein sequence ID" value="BAC29757.1"/>
    <property type="molecule type" value="mRNA"/>
</dbReference>
<dbReference type="EMBL" id="AK085719">
    <property type="protein sequence ID" value="BAC39517.1"/>
    <property type="molecule type" value="mRNA"/>
</dbReference>
<dbReference type="EMBL" id="BC031933">
    <property type="protein sequence ID" value="AAH31933.1"/>
    <property type="molecule type" value="mRNA"/>
</dbReference>
<dbReference type="CCDS" id="CCDS50419.1"/>
<dbReference type="RefSeq" id="NP_076392.1">
    <property type="nucleotide sequence ID" value="NM_023903.1"/>
</dbReference>
<dbReference type="RefSeq" id="XP_006527529.1">
    <property type="nucleotide sequence ID" value="XM_006527466.4"/>
</dbReference>
<dbReference type="SMR" id="Q8K2A6"/>
<dbReference type="FunCoup" id="Q8K2A6">
    <property type="interactions" value="1"/>
</dbReference>
<dbReference type="STRING" id="10090.ENSMUSP00000025685"/>
<dbReference type="ESTHER" id="mouse-LIPM">
    <property type="family name" value="Acidic_Lipase"/>
</dbReference>
<dbReference type="MEROPS" id="S33.A58"/>
<dbReference type="GlyCosmos" id="Q8K2A6">
    <property type="glycosylation" value="1 site, No reported glycans"/>
</dbReference>
<dbReference type="GlyGen" id="Q8K2A6">
    <property type="glycosylation" value="1 site"/>
</dbReference>
<dbReference type="iPTMnet" id="Q8K2A6"/>
<dbReference type="PhosphoSitePlus" id="Q8K2A6"/>
<dbReference type="PaxDb" id="10090-ENSMUSP00000025685"/>
<dbReference type="ProteomicsDB" id="292333"/>
<dbReference type="Antibodypedia" id="56561">
    <property type="antibodies" value="67 antibodies from 12 providers"/>
</dbReference>
<dbReference type="Ensembl" id="ENSMUST00000025685.8">
    <property type="protein sequence ID" value="ENSMUSP00000025685.7"/>
    <property type="gene ID" value="ENSMUSG00000056078.7"/>
</dbReference>
<dbReference type="GeneID" id="78753"/>
<dbReference type="KEGG" id="mmu:78753"/>
<dbReference type="UCSC" id="uc008hga.2">
    <property type="organism name" value="mouse"/>
</dbReference>
<dbReference type="AGR" id="MGI:1926003"/>
<dbReference type="CTD" id="340654"/>
<dbReference type="MGI" id="MGI:1926003">
    <property type="gene designation" value="Lipm"/>
</dbReference>
<dbReference type="VEuPathDB" id="HostDB:ENSMUSG00000056078"/>
<dbReference type="eggNOG" id="KOG2624">
    <property type="taxonomic scope" value="Eukaryota"/>
</dbReference>
<dbReference type="GeneTree" id="ENSGT00940000156860"/>
<dbReference type="HOGENOM" id="CLU_010974_0_0_1"/>
<dbReference type="InParanoid" id="Q8K2A6"/>
<dbReference type="OMA" id="GHMPTKA"/>
<dbReference type="OrthoDB" id="9974421at2759"/>
<dbReference type="PhylomeDB" id="Q8K2A6"/>
<dbReference type="TreeFam" id="TF315485"/>
<dbReference type="Reactome" id="R-MMU-6809371">
    <property type="pathway name" value="Formation of the cornified envelope"/>
</dbReference>
<dbReference type="BioGRID-ORCS" id="78753">
    <property type="hits" value="0 hits in 78 CRISPR screens"/>
</dbReference>
<dbReference type="ChiTaRS" id="Lipm">
    <property type="organism name" value="mouse"/>
</dbReference>
<dbReference type="PRO" id="PR:Q8K2A6"/>
<dbReference type="Proteomes" id="UP000000589">
    <property type="component" value="Chromosome 19"/>
</dbReference>
<dbReference type="RNAct" id="Q8K2A6">
    <property type="molecule type" value="protein"/>
</dbReference>
<dbReference type="Bgee" id="ENSMUSG00000056078">
    <property type="expression patterns" value="Expressed in esophagus and 40 other cell types or tissues"/>
</dbReference>
<dbReference type="GO" id="GO:0005576">
    <property type="term" value="C:extracellular region"/>
    <property type="evidence" value="ECO:0007669"/>
    <property type="project" value="UniProtKB-SubCell"/>
</dbReference>
<dbReference type="GO" id="GO:0016788">
    <property type="term" value="F:hydrolase activity, acting on ester bonds"/>
    <property type="evidence" value="ECO:0007669"/>
    <property type="project" value="InterPro"/>
</dbReference>
<dbReference type="GO" id="GO:0016042">
    <property type="term" value="P:lipid catabolic process"/>
    <property type="evidence" value="ECO:0007669"/>
    <property type="project" value="UniProtKB-KW"/>
</dbReference>
<dbReference type="FunFam" id="3.40.50.1820:FF:000012">
    <property type="entry name" value="Lipase"/>
    <property type="match status" value="1"/>
</dbReference>
<dbReference type="Gene3D" id="3.40.50.1820">
    <property type="entry name" value="alpha/beta hydrolase"/>
    <property type="match status" value="1"/>
</dbReference>
<dbReference type="InterPro" id="IPR000073">
    <property type="entry name" value="AB_hydrolase_1"/>
</dbReference>
<dbReference type="InterPro" id="IPR029058">
    <property type="entry name" value="AB_hydrolase_fold"/>
</dbReference>
<dbReference type="InterPro" id="IPR025483">
    <property type="entry name" value="Lipase_euk"/>
</dbReference>
<dbReference type="PANTHER" id="PTHR11005">
    <property type="entry name" value="LYSOSOMAL ACID LIPASE-RELATED"/>
    <property type="match status" value="1"/>
</dbReference>
<dbReference type="Pfam" id="PF00561">
    <property type="entry name" value="Abhydrolase_1"/>
    <property type="match status" value="1"/>
</dbReference>
<dbReference type="PIRSF" id="PIRSF000862">
    <property type="entry name" value="Steryl_ester_lip"/>
    <property type="match status" value="1"/>
</dbReference>
<dbReference type="SUPFAM" id="SSF53474">
    <property type="entry name" value="alpha/beta-Hydrolases"/>
    <property type="match status" value="1"/>
</dbReference>
<dbReference type="PROSITE" id="PS00120">
    <property type="entry name" value="LIPASE_SER"/>
    <property type="match status" value="1"/>
</dbReference>